<gene>
    <name evidence="1" type="primary">guaC</name>
    <name type="ordered locus">SCH_0140</name>
</gene>
<keyword id="KW-0479">Metal-binding</keyword>
<keyword id="KW-0521">NADP</keyword>
<keyword id="KW-0560">Oxidoreductase</keyword>
<keyword id="KW-0630">Potassium</keyword>
<organism>
    <name type="scientific">Salmonella choleraesuis (strain SC-B67)</name>
    <dbReference type="NCBI Taxonomy" id="321314"/>
    <lineage>
        <taxon>Bacteria</taxon>
        <taxon>Pseudomonadati</taxon>
        <taxon>Pseudomonadota</taxon>
        <taxon>Gammaproteobacteria</taxon>
        <taxon>Enterobacterales</taxon>
        <taxon>Enterobacteriaceae</taxon>
        <taxon>Salmonella</taxon>
    </lineage>
</organism>
<proteinExistence type="inferred from homology"/>
<name>GUAC_SALCH</name>
<accession>Q57TB5</accession>
<sequence length="347" mass="37149">MRIEEDLKLGFKDVLIRPKRSTLKSRSDVELERQFTFKYSGQTWSGVPIIAANMDTVGTFEMAQALAGFDILTAVHKHYTVEEWAAFINTASADVLKHVMVSTGTSDADFEKTVQILALNPALNFVCIDVANGYSEHFVQFVAKAREAWPTKTICAGNVVTGEMCEEPILSGADIVKVGIGPGSVCTTRVKTGVGYPQLSAVIECADAAHGLGGMIVSDGGCTMPGDVAKAFGGGADFVMLGGMLAGHEESGGSVVEENGEKFMLFYGMSSESAMNRHVGGVAKYRAAEGKTVKLPLRGPVGNTARDILGGLRSACTYVGASRLKELTKRTTFIRVQEQENRIFNSL</sequence>
<protein>
    <recommendedName>
        <fullName evidence="1">GMP reductase</fullName>
        <ecNumber evidence="1">1.7.1.7</ecNumber>
    </recommendedName>
    <alternativeName>
        <fullName evidence="1">Guanosine 5'-monophosphate oxidoreductase</fullName>
        <shortName evidence="1">Guanosine monophosphate reductase</shortName>
    </alternativeName>
</protein>
<reference key="1">
    <citation type="journal article" date="2005" name="Nucleic Acids Res.">
        <title>The genome sequence of Salmonella enterica serovar Choleraesuis, a highly invasive and resistant zoonotic pathogen.</title>
        <authorList>
            <person name="Chiu C.-H."/>
            <person name="Tang P."/>
            <person name="Chu C."/>
            <person name="Hu S."/>
            <person name="Bao Q."/>
            <person name="Yu J."/>
            <person name="Chou Y.-Y."/>
            <person name="Wang H.-S."/>
            <person name="Lee Y.-S."/>
        </authorList>
    </citation>
    <scope>NUCLEOTIDE SEQUENCE [LARGE SCALE GENOMIC DNA]</scope>
    <source>
        <strain>SC-B67</strain>
    </source>
</reference>
<evidence type="ECO:0000255" key="1">
    <source>
        <dbReference type="HAMAP-Rule" id="MF_00596"/>
    </source>
</evidence>
<feature type="chain" id="PRO_1000025616" description="GMP reductase">
    <location>
        <begin position="1"/>
        <end position="347"/>
    </location>
</feature>
<feature type="active site" description="Thioimidate intermediate" evidence="1">
    <location>
        <position position="186"/>
    </location>
</feature>
<feature type="binding site" evidence="1">
    <location>
        <begin position="108"/>
        <end position="131"/>
    </location>
    <ligand>
        <name>NADP(+)</name>
        <dbReference type="ChEBI" id="CHEBI:58349"/>
    </ligand>
</feature>
<feature type="binding site" evidence="1">
    <location>
        <position position="181"/>
    </location>
    <ligand>
        <name>K(+)</name>
        <dbReference type="ChEBI" id="CHEBI:29103"/>
    </ligand>
</feature>
<feature type="binding site" evidence="1">
    <location>
        <position position="183"/>
    </location>
    <ligand>
        <name>K(+)</name>
        <dbReference type="ChEBI" id="CHEBI:29103"/>
    </ligand>
</feature>
<feature type="binding site" evidence="1">
    <location>
        <begin position="216"/>
        <end position="239"/>
    </location>
    <ligand>
        <name>NADP(+)</name>
        <dbReference type="ChEBI" id="CHEBI:58349"/>
    </ligand>
</feature>
<dbReference type="EC" id="1.7.1.7" evidence="1"/>
<dbReference type="EMBL" id="AE017220">
    <property type="protein sequence ID" value="AAX64046.1"/>
    <property type="molecule type" value="Genomic_DNA"/>
</dbReference>
<dbReference type="RefSeq" id="WP_001538997.1">
    <property type="nucleotide sequence ID" value="NC_006905.1"/>
</dbReference>
<dbReference type="SMR" id="Q57TB5"/>
<dbReference type="KEGG" id="sec:SCH_0140"/>
<dbReference type="HOGENOM" id="CLU_022552_5_3_6"/>
<dbReference type="Proteomes" id="UP000000538">
    <property type="component" value="Chromosome"/>
</dbReference>
<dbReference type="GO" id="GO:0005829">
    <property type="term" value="C:cytosol"/>
    <property type="evidence" value="ECO:0007669"/>
    <property type="project" value="TreeGrafter"/>
</dbReference>
<dbReference type="GO" id="GO:1902560">
    <property type="term" value="C:GMP reductase complex"/>
    <property type="evidence" value="ECO:0007669"/>
    <property type="project" value="InterPro"/>
</dbReference>
<dbReference type="GO" id="GO:0003920">
    <property type="term" value="F:GMP reductase activity"/>
    <property type="evidence" value="ECO:0007669"/>
    <property type="project" value="UniProtKB-UniRule"/>
</dbReference>
<dbReference type="GO" id="GO:0046872">
    <property type="term" value="F:metal ion binding"/>
    <property type="evidence" value="ECO:0007669"/>
    <property type="project" value="UniProtKB-KW"/>
</dbReference>
<dbReference type="GO" id="GO:0006163">
    <property type="term" value="P:purine nucleotide metabolic process"/>
    <property type="evidence" value="ECO:0007669"/>
    <property type="project" value="UniProtKB-UniRule"/>
</dbReference>
<dbReference type="CDD" id="cd00381">
    <property type="entry name" value="IMPDH"/>
    <property type="match status" value="1"/>
</dbReference>
<dbReference type="FunFam" id="3.20.20.70:FF:000012">
    <property type="entry name" value="GMP reductase"/>
    <property type="match status" value="1"/>
</dbReference>
<dbReference type="Gene3D" id="3.20.20.70">
    <property type="entry name" value="Aldolase class I"/>
    <property type="match status" value="1"/>
</dbReference>
<dbReference type="HAMAP" id="MF_00596">
    <property type="entry name" value="GMP_reduct_type1"/>
    <property type="match status" value="1"/>
</dbReference>
<dbReference type="InterPro" id="IPR013785">
    <property type="entry name" value="Aldolase_TIM"/>
</dbReference>
<dbReference type="InterPro" id="IPR050139">
    <property type="entry name" value="GMP_reductase"/>
</dbReference>
<dbReference type="InterPro" id="IPR005993">
    <property type="entry name" value="GMPR"/>
</dbReference>
<dbReference type="InterPro" id="IPR015875">
    <property type="entry name" value="IMP_DH/GMP_Rdtase_CS"/>
</dbReference>
<dbReference type="InterPro" id="IPR001093">
    <property type="entry name" value="IMP_DH_GMPRt"/>
</dbReference>
<dbReference type="NCBIfam" id="TIGR01305">
    <property type="entry name" value="GMP_reduct_1"/>
    <property type="match status" value="1"/>
</dbReference>
<dbReference type="NCBIfam" id="NF003470">
    <property type="entry name" value="PRK05096.1"/>
    <property type="match status" value="1"/>
</dbReference>
<dbReference type="PANTHER" id="PTHR43170">
    <property type="entry name" value="GMP REDUCTASE"/>
    <property type="match status" value="1"/>
</dbReference>
<dbReference type="PANTHER" id="PTHR43170:SF5">
    <property type="entry name" value="GMP REDUCTASE"/>
    <property type="match status" value="1"/>
</dbReference>
<dbReference type="Pfam" id="PF00478">
    <property type="entry name" value="IMPDH"/>
    <property type="match status" value="1"/>
</dbReference>
<dbReference type="PIRSF" id="PIRSF000235">
    <property type="entry name" value="GMP_reductase"/>
    <property type="match status" value="1"/>
</dbReference>
<dbReference type="SMART" id="SM01240">
    <property type="entry name" value="IMPDH"/>
    <property type="match status" value="1"/>
</dbReference>
<dbReference type="SUPFAM" id="SSF51412">
    <property type="entry name" value="Inosine monophosphate dehydrogenase (IMPDH)"/>
    <property type="match status" value="1"/>
</dbReference>
<dbReference type="PROSITE" id="PS00487">
    <property type="entry name" value="IMP_DH_GMP_RED"/>
    <property type="match status" value="1"/>
</dbReference>
<comment type="function">
    <text evidence="1">Catalyzes the irreversible NADPH-dependent deamination of GMP to IMP. It functions in the conversion of nucleobase, nucleoside and nucleotide derivatives of G to A nucleotides, and in maintaining the intracellular balance of A and G nucleotides.</text>
</comment>
<comment type="catalytic activity">
    <reaction evidence="1">
        <text>IMP + NH4(+) + NADP(+) = GMP + NADPH + 2 H(+)</text>
        <dbReference type="Rhea" id="RHEA:17185"/>
        <dbReference type="ChEBI" id="CHEBI:15378"/>
        <dbReference type="ChEBI" id="CHEBI:28938"/>
        <dbReference type="ChEBI" id="CHEBI:57783"/>
        <dbReference type="ChEBI" id="CHEBI:58053"/>
        <dbReference type="ChEBI" id="CHEBI:58115"/>
        <dbReference type="ChEBI" id="CHEBI:58349"/>
        <dbReference type="EC" id="1.7.1.7"/>
    </reaction>
</comment>
<comment type="subunit">
    <text evidence="1">Homotetramer.</text>
</comment>
<comment type="similarity">
    <text evidence="1">Belongs to the IMPDH/GMPR family. GuaC type 1 subfamily.</text>
</comment>